<sequence length="336" mass="36315">MKIAIVNDMPMAIEALRRALAFEPAHQVIWVAANGADAVQRSIEQTPDLILMDLIMPVMDGVEATRRIMAETPCAIVIVTVDREQNMRRVFEAMGHGALDVVDTPAIGGPNPREAAAPLLRKILNIDWLMGQRVGRERVVTTSRSEVSRRDRLVAIGSSAGGPAALEILLKGLPENFPAAIVLVQHVDQVFAAGMAEWLCSASGMPVRLAKEGETPQVGVVLLAGTNHHIRLLKDGTLAYTAEPVNEVYRPSIDVFFESVTRYWTGEAVGVLLTGMGRDGAQGLKAMRERGFLTIAQDQASSAVYGMPKAAAAIDAAVEIRPLHTIAPRLMEVFTQ</sequence>
<proteinExistence type="inferred from homology"/>
<keyword id="KW-0145">Chemotaxis</keyword>
<keyword id="KW-0963">Cytoplasm</keyword>
<keyword id="KW-0378">Hydrolase</keyword>
<keyword id="KW-0597">Phosphoprotein</keyword>
<keyword id="KW-1185">Reference proteome</keyword>
<comment type="function">
    <text evidence="1">Involved in chemotaxis. Part of a chemotaxis signal transduction system that modulates chemotaxis in response to various stimuli. Catalyzes the demethylation of specific methylglutamate residues introduced into the chemoreceptors (methyl-accepting chemotaxis proteins or MCP) by CheR. Also mediates the irreversible deamidation of specific glutamine residues to glutamic acid.</text>
</comment>
<comment type="catalytic activity">
    <reaction evidence="1">
        <text>[protein]-L-glutamate 5-O-methyl ester + H2O = L-glutamyl-[protein] + methanol + H(+)</text>
        <dbReference type="Rhea" id="RHEA:23236"/>
        <dbReference type="Rhea" id="RHEA-COMP:10208"/>
        <dbReference type="Rhea" id="RHEA-COMP:10311"/>
        <dbReference type="ChEBI" id="CHEBI:15377"/>
        <dbReference type="ChEBI" id="CHEBI:15378"/>
        <dbReference type="ChEBI" id="CHEBI:17790"/>
        <dbReference type="ChEBI" id="CHEBI:29973"/>
        <dbReference type="ChEBI" id="CHEBI:82795"/>
        <dbReference type="EC" id="3.1.1.61"/>
    </reaction>
</comment>
<comment type="catalytic activity">
    <reaction evidence="1">
        <text>L-glutaminyl-[protein] + H2O = L-glutamyl-[protein] + NH4(+)</text>
        <dbReference type="Rhea" id="RHEA:16441"/>
        <dbReference type="Rhea" id="RHEA-COMP:10207"/>
        <dbReference type="Rhea" id="RHEA-COMP:10208"/>
        <dbReference type="ChEBI" id="CHEBI:15377"/>
        <dbReference type="ChEBI" id="CHEBI:28938"/>
        <dbReference type="ChEBI" id="CHEBI:29973"/>
        <dbReference type="ChEBI" id="CHEBI:30011"/>
        <dbReference type="EC" id="3.5.1.44"/>
    </reaction>
</comment>
<comment type="subcellular location">
    <subcellularLocation>
        <location evidence="1">Cytoplasm</location>
    </subcellularLocation>
</comment>
<comment type="domain">
    <text evidence="1">Contains a C-terminal catalytic domain, and an N-terminal region which modulates catalytic activity.</text>
</comment>
<comment type="PTM">
    <text evidence="1">Phosphorylated by CheA. Phosphorylation of the N-terminal regulatory domain activates the methylesterase activity.</text>
</comment>
<comment type="similarity">
    <text evidence="1">Belongs to the CheB family.</text>
</comment>
<protein>
    <recommendedName>
        <fullName evidence="1">Protein-glutamate methylesterase/protein-glutamine glutaminase 3</fullName>
        <ecNumber evidence="1">3.1.1.61</ecNumber>
        <ecNumber evidence="1">3.5.1.44</ecNumber>
    </recommendedName>
</protein>
<accession>Q886S8</accession>
<evidence type="ECO:0000255" key="1">
    <source>
        <dbReference type="HAMAP-Rule" id="MF_00099"/>
    </source>
</evidence>
<gene>
    <name evidence="1" type="primary">cheB3</name>
    <name type="ordered locus">PSPTO_1498</name>
</gene>
<dbReference type="EC" id="3.1.1.61" evidence="1"/>
<dbReference type="EC" id="3.5.1.44" evidence="1"/>
<dbReference type="EMBL" id="AE016853">
    <property type="protein sequence ID" value="AAO55019.1"/>
    <property type="molecule type" value="Genomic_DNA"/>
</dbReference>
<dbReference type="RefSeq" id="NP_791324.1">
    <property type="nucleotide sequence ID" value="NC_004578.1"/>
</dbReference>
<dbReference type="RefSeq" id="WP_005765912.1">
    <property type="nucleotide sequence ID" value="NC_004578.1"/>
</dbReference>
<dbReference type="SMR" id="Q886S8"/>
<dbReference type="STRING" id="223283.PSPTO_1498"/>
<dbReference type="GeneID" id="1183135"/>
<dbReference type="KEGG" id="pst:PSPTO_1498"/>
<dbReference type="PATRIC" id="fig|223283.9.peg.1519"/>
<dbReference type="eggNOG" id="COG2201">
    <property type="taxonomic scope" value="Bacteria"/>
</dbReference>
<dbReference type="HOGENOM" id="CLU_000445_51_0_6"/>
<dbReference type="OrthoDB" id="9793421at2"/>
<dbReference type="PhylomeDB" id="Q886S8"/>
<dbReference type="Proteomes" id="UP000002515">
    <property type="component" value="Chromosome"/>
</dbReference>
<dbReference type="GO" id="GO:0005737">
    <property type="term" value="C:cytoplasm"/>
    <property type="evidence" value="ECO:0007669"/>
    <property type="project" value="UniProtKB-SubCell"/>
</dbReference>
<dbReference type="GO" id="GO:0000156">
    <property type="term" value="F:phosphorelay response regulator activity"/>
    <property type="evidence" value="ECO:0007669"/>
    <property type="project" value="InterPro"/>
</dbReference>
<dbReference type="GO" id="GO:0008984">
    <property type="term" value="F:protein-glutamate methylesterase activity"/>
    <property type="evidence" value="ECO:0007669"/>
    <property type="project" value="UniProtKB-UniRule"/>
</dbReference>
<dbReference type="GO" id="GO:0050568">
    <property type="term" value="F:protein-glutamine glutaminase activity"/>
    <property type="evidence" value="ECO:0007669"/>
    <property type="project" value="UniProtKB-UniRule"/>
</dbReference>
<dbReference type="GO" id="GO:0006935">
    <property type="term" value="P:chemotaxis"/>
    <property type="evidence" value="ECO:0007669"/>
    <property type="project" value="UniProtKB-UniRule"/>
</dbReference>
<dbReference type="CDD" id="cd16432">
    <property type="entry name" value="CheB_Rec"/>
    <property type="match status" value="1"/>
</dbReference>
<dbReference type="CDD" id="cd17541">
    <property type="entry name" value="REC_CheB-like"/>
    <property type="match status" value="1"/>
</dbReference>
<dbReference type="Gene3D" id="3.40.50.2300">
    <property type="match status" value="1"/>
</dbReference>
<dbReference type="Gene3D" id="3.40.50.180">
    <property type="entry name" value="Methylesterase CheB, C-terminal domain"/>
    <property type="match status" value="1"/>
</dbReference>
<dbReference type="HAMAP" id="MF_00099">
    <property type="entry name" value="CheB_chemtxs"/>
    <property type="match status" value="1"/>
</dbReference>
<dbReference type="InterPro" id="IPR008248">
    <property type="entry name" value="CheB-like"/>
</dbReference>
<dbReference type="InterPro" id="IPR035909">
    <property type="entry name" value="CheB_C"/>
</dbReference>
<dbReference type="InterPro" id="IPR011006">
    <property type="entry name" value="CheY-like_superfamily"/>
</dbReference>
<dbReference type="InterPro" id="IPR000673">
    <property type="entry name" value="Sig_transdc_resp-reg_Me-estase"/>
</dbReference>
<dbReference type="InterPro" id="IPR001789">
    <property type="entry name" value="Sig_transdc_resp-reg_receiver"/>
</dbReference>
<dbReference type="NCBIfam" id="NF009206">
    <property type="entry name" value="PRK12555.1"/>
    <property type="match status" value="1"/>
</dbReference>
<dbReference type="PANTHER" id="PTHR42872">
    <property type="entry name" value="PROTEIN-GLUTAMATE METHYLESTERASE/PROTEIN-GLUTAMINE GLUTAMINASE"/>
    <property type="match status" value="1"/>
</dbReference>
<dbReference type="PANTHER" id="PTHR42872:SF6">
    <property type="entry name" value="PROTEIN-GLUTAMATE METHYLESTERASE_PROTEIN-GLUTAMINE GLUTAMINASE"/>
    <property type="match status" value="1"/>
</dbReference>
<dbReference type="Pfam" id="PF01339">
    <property type="entry name" value="CheB_methylest"/>
    <property type="match status" value="1"/>
</dbReference>
<dbReference type="Pfam" id="PF00072">
    <property type="entry name" value="Response_reg"/>
    <property type="match status" value="1"/>
</dbReference>
<dbReference type="PIRSF" id="PIRSF000876">
    <property type="entry name" value="RR_chemtxs_CheB"/>
    <property type="match status" value="1"/>
</dbReference>
<dbReference type="SMART" id="SM00448">
    <property type="entry name" value="REC"/>
    <property type="match status" value="1"/>
</dbReference>
<dbReference type="SUPFAM" id="SSF52172">
    <property type="entry name" value="CheY-like"/>
    <property type="match status" value="1"/>
</dbReference>
<dbReference type="SUPFAM" id="SSF52738">
    <property type="entry name" value="Methylesterase CheB, C-terminal domain"/>
    <property type="match status" value="1"/>
</dbReference>
<dbReference type="PROSITE" id="PS50122">
    <property type="entry name" value="CHEB"/>
    <property type="match status" value="1"/>
</dbReference>
<dbReference type="PROSITE" id="PS50110">
    <property type="entry name" value="RESPONSE_REGULATORY"/>
    <property type="match status" value="1"/>
</dbReference>
<organism>
    <name type="scientific">Pseudomonas syringae pv. tomato (strain ATCC BAA-871 / DC3000)</name>
    <dbReference type="NCBI Taxonomy" id="223283"/>
    <lineage>
        <taxon>Bacteria</taxon>
        <taxon>Pseudomonadati</taxon>
        <taxon>Pseudomonadota</taxon>
        <taxon>Gammaproteobacteria</taxon>
        <taxon>Pseudomonadales</taxon>
        <taxon>Pseudomonadaceae</taxon>
        <taxon>Pseudomonas</taxon>
    </lineage>
</organism>
<feature type="chain" id="PRO_0000158016" description="Protein-glutamate methylesterase/protein-glutamine glutaminase 3">
    <location>
        <begin position="1"/>
        <end position="336"/>
    </location>
</feature>
<feature type="domain" description="Response regulatory" evidence="1">
    <location>
        <begin position="2"/>
        <end position="119"/>
    </location>
</feature>
<feature type="domain" description="CheB-type methylesterase" evidence="1">
    <location>
        <begin position="147"/>
        <end position="336"/>
    </location>
</feature>
<feature type="active site" evidence="1">
    <location>
        <position position="159"/>
    </location>
</feature>
<feature type="active site" evidence="1">
    <location>
        <position position="186"/>
    </location>
</feature>
<feature type="active site" evidence="1">
    <location>
        <position position="279"/>
    </location>
</feature>
<feature type="modified residue" description="4-aspartylphosphate" evidence="1">
    <location>
        <position position="53"/>
    </location>
</feature>
<name>CHEB3_PSESM</name>
<reference key="1">
    <citation type="journal article" date="2003" name="Proc. Natl. Acad. Sci. U.S.A.">
        <title>The complete genome sequence of the Arabidopsis and tomato pathogen Pseudomonas syringae pv. tomato DC3000.</title>
        <authorList>
            <person name="Buell C.R."/>
            <person name="Joardar V."/>
            <person name="Lindeberg M."/>
            <person name="Selengut J."/>
            <person name="Paulsen I.T."/>
            <person name="Gwinn M.L."/>
            <person name="Dodson R.J."/>
            <person name="DeBoy R.T."/>
            <person name="Durkin A.S."/>
            <person name="Kolonay J.F."/>
            <person name="Madupu R."/>
            <person name="Daugherty S.C."/>
            <person name="Brinkac L.M."/>
            <person name="Beanan M.J."/>
            <person name="Haft D.H."/>
            <person name="Nelson W.C."/>
            <person name="Davidsen T.M."/>
            <person name="Zafar N."/>
            <person name="Zhou L."/>
            <person name="Liu J."/>
            <person name="Yuan Q."/>
            <person name="Khouri H.M."/>
            <person name="Fedorova N.B."/>
            <person name="Tran B."/>
            <person name="Russell D."/>
            <person name="Berry K.J."/>
            <person name="Utterback T.R."/>
            <person name="Van Aken S.E."/>
            <person name="Feldblyum T.V."/>
            <person name="D'Ascenzo M."/>
            <person name="Deng W.-L."/>
            <person name="Ramos A.R."/>
            <person name="Alfano J.R."/>
            <person name="Cartinhour S."/>
            <person name="Chatterjee A.K."/>
            <person name="Delaney T.P."/>
            <person name="Lazarowitz S.G."/>
            <person name="Martin G.B."/>
            <person name="Schneider D.J."/>
            <person name="Tang X."/>
            <person name="Bender C.L."/>
            <person name="White O."/>
            <person name="Fraser C.M."/>
            <person name="Collmer A."/>
        </authorList>
    </citation>
    <scope>NUCLEOTIDE SEQUENCE [LARGE SCALE GENOMIC DNA]</scope>
    <source>
        <strain>ATCC BAA-871 / DC3000</strain>
    </source>
</reference>